<protein>
    <recommendedName>
        <fullName evidence="1">Protease HtpX homolog</fullName>
        <ecNumber evidence="1">3.4.24.-</ecNumber>
    </recommendedName>
</protein>
<proteinExistence type="inferred from homology"/>
<evidence type="ECO:0000255" key="1">
    <source>
        <dbReference type="HAMAP-Rule" id="MF_00188"/>
    </source>
</evidence>
<reference key="1">
    <citation type="journal article" date="2004" name="J. Bacteriol.">
        <title>Comparative genomics of two Leptospira interrogans serovars reveals novel insights into physiology and pathogenesis.</title>
        <authorList>
            <person name="Nascimento A.L.T.O."/>
            <person name="Ko A.I."/>
            <person name="Martins E.A.L."/>
            <person name="Monteiro-Vitorello C.B."/>
            <person name="Ho P.L."/>
            <person name="Haake D.A."/>
            <person name="Verjovski-Almeida S."/>
            <person name="Hartskeerl R.A."/>
            <person name="Marques M.V."/>
            <person name="Oliveira M.C."/>
            <person name="Menck C.F.M."/>
            <person name="Leite L.C.C."/>
            <person name="Carrer H."/>
            <person name="Coutinho L.L."/>
            <person name="Degrave W.M."/>
            <person name="Dellagostin O.A."/>
            <person name="El-Dorry H."/>
            <person name="Ferro E.S."/>
            <person name="Ferro M.I.T."/>
            <person name="Furlan L.R."/>
            <person name="Gamberini M."/>
            <person name="Giglioti E.A."/>
            <person name="Goes-Neto A."/>
            <person name="Goldman G.H."/>
            <person name="Goldman M.H.S."/>
            <person name="Harakava R."/>
            <person name="Jeronimo S.M.B."/>
            <person name="Junqueira-de-Azevedo I.L.M."/>
            <person name="Kimura E.T."/>
            <person name="Kuramae E.E."/>
            <person name="Lemos E.G.M."/>
            <person name="Lemos M.V.F."/>
            <person name="Marino C.L."/>
            <person name="Nunes L.R."/>
            <person name="de Oliveira R.C."/>
            <person name="Pereira G.G."/>
            <person name="Reis M.S."/>
            <person name="Schriefer A."/>
            <person name="Siqueira W.J."/>
            <person name="Sommer P."/>
            <person name="Tsai S.M."/>
            <person name="Simpson A.J.G."/>
            <person name="Ferro J.A."/>
            <person name="Camargo L.E.A."/>
            <person name="Kitajima J.P."/>
            <person name="Setubal J.C."/>
            <person name="Van Sluys M.A."/>
        </authorList>
    </citation>
    <scope>NUCLEOTIDE SEQUENCE [LARGE SCALE GENOMIC DNA]</scope>
    <source>
        <strain>Fiocruz L1-130</strain>
    </source>
</reference>
<keyword id="KW-0997">Cell inner membrane</keyword>
<keyword id="KW-1003">Cell membrane</keyword>
<keyword id="KW-0378">Hydrolase</keyword>
<keyword id="KW-0472">Membrane</keyword>
<keyword id="KW-0479">Metal-binding</keyword>
<keyword id="KW-0482">Metalloprotease</keyword>
<keyword id="KW-0645">Protease</keyword>
<keyword id="KW-0812">Transmembrane</keyword>
<keyword id="KW-1133">Transmembrane helix</keyword>
<keyword id="KW-0862">Zinc</keyword>
<sequence>MWFKRIGLFLLTNILVVVTISIVTSVLGIGPYLDANGINLSSLLVFCFLWGMGGAFVSLLLSKFMAKMMMGVQVIDPRSASGAERELYSRVERLARTANLPMPEVGIYHSPEVNAFATGPSKSSSLVAVSSGLLQTMDNAEVEGVLAHELAHVANGDMVTMTLIQGVVNAFVMFFSRIISYALSTMVKDELQYTVRLIANIVLSILFSILGSIIVAYFSRTREYRADAGGAKLAGRQNMIAALEKLKRTFDAPEDERGREALATMKISGHNKWMALFSTHPPLEARIAALKNSGY</sequence>
<comment type="cofactor">
    <cofactor evidence="1">
        <name>Zn(2+)</name>
        <dbReference type="ChEBI" id="CHEBI:29105"/>
    </cofactor>
    <text evidence="1">Binds 1 zinc ion per subunit.</text>
</comment>
<comment type="subcellular location">
    <subcellularLocation>
        <location evidence="1">Cell inner membrane</location>
        <topology evidence="1">Multi-pass membrane protein</topology>
    </subcellularLocation>
</comment>
<comment type="similarity">
    <text evidence="1">Belongs to the peptidase M48B family.</text>
</comment>
<dbReference type="EC" id="3.4.24.-" evidence="1"/>
<dbReference type="EMBL" id="AE016824">
    <property type="protein sequence ID" value="AAS72169.1"/>
    <property type="molecule type" value="Genomic_DNA"/>
</dbReference>
<dbReference type="RefSeq" id="WP_000264281.1">
    <property type="nucleotide sequence ID" value="NC_005824.1"/>
</dbReference>
<dbReference type="SMR" id="Q75FP1"/>
<dbReference type="MEROPS" id="M48.002"/>
<dbReference type="GeneID" id="61141337"/>
<dbReference type="KEGG" id="lic:LIC_20141"/>
<dbReference type="HOGENOM" id="CLU_042266_1_0_12"/>
<dbReference type="Proteomes" id="UP000007037">
    <property type="component" value="Chromosome II"/>
</dbReference>
<dbReference type="GO" id="GO:0005886">
    <property type="term" value="C:plasma membrane"/>
    <property type="evidence" value="ECO:0007669"/>
    <property type="project" value="UniProtKB-SubCell"/>
</dbReference>
<dbReference type="GO" id="GO:0004222">
    <property type="term" value="F:metalloendopeptidase activity"/>
    <property type="evidence" value="ECO:0007669"/>
    <property type="project" value="UniProtKB-UniRule"/>
</dbReference>
<dbReference type="GO" id="GO:0008270">
    <property type="term" value="F:zinc ion binding"/>
    <property type="evidence" value="ECO:0007669"/>
    <property type="project" value="UniProtKB-UniRule"/>
</dbReference>
<dbReference type="GO" id="GO:0006508">
    <property type="term" value="P:proteolysis"/>
    <property type="evidence" value="ECO:0007669"/>
    <property type="project" value="UniProtKB-KW"/>
</dbReference>
<dbReference type="CDD" id="cd07335">
    <property type="entry name" value="M48B_HtpX_like"/>
    <property type="match status" value="1"/>
</dbReference>
<dbReference type="Gene3D" id="3.30.2010.10">
    <property type="entry name" value="Metalloproteases ('zincins'), catalytic domain"/>
    <property type="match status" value="1"/>
</dbReference>
<dbReference type="HAMAP" id="MF_00188">
    <property type="entry name" value="Pept_M48_protease_HtpX"/>
    <property type="match status" value="1"/>
</dbReference>
<dbReference type="InterPro" id="IPR050083">
    <property type="entry name" value="HtpX_protease"/>
</dbReference>
<dbReference type="InterPro" id="IPR022919">
    <property type="entry name" value="Pept_M48_protease_HtpX"/>
</dbReference>
<dbReference type="InterPro" id="IPR001915">
    <property type="entry name" value="Peptidase_M48"/>
</dbReference>
<dbReference type="NCBIfam" id="NF003965">
    <property type="entry name" value="PRK05457.1"/>
    <property type="match status" value="1"/>
</dbReference>
<dbReference type="PANTHER" id="PTHR43221">
    <property type="entry name" value="PROTEASE HTPX"/>
    <property type="match status" value="1"/>
</dbReference>
<dbReference type="PANTHER" id="PTHR43221:SF1">
    <property type="entry name" value="PROTEASE HTPX"/>
    <property type="match status" value="1"/>
</dbReference>
<dbReference type="Pfam" id="PF01435">
    <property type="entry name" value="Peptidase_M48"/>
    <property type="match status" value="1"/>
</dbReference>
<accession>Q75FP1</accession>
<name>HTPX_LEPIC</name>
<feature type="chain" id="PRO_0000138868" description="Protease HtpX homolog">
    <location>
        <begin position="1"/>
        <end position="295"/>
    </location>
</feature>
<feature type="transmembrane region" description="Helical" evidence="1">
    <location>
        <begin position="6"/>
        <end position="26"/>
    </location>
</feature>
<feature type="transmembrane region" description="Helical" evidence="1">
    <location>
        <begin position="40"/>
        <end position="60"/>
    </location>
</feature>
<feature type="transmembrane region" description="Helical" evidence="1">
    <location>
        <begin position="163"/>
        <end position="183"/>
    </location>
</feature>
<feature type="transmembrane region" description="Helical" evidence="1">
    <location>
        <begin position="198"/>
        <end position="218"/>
    </location>
</feature>
<feature type="active site" evidence="1">
    <location>
        <position position="149"/>
    </location>
</feature>
<feature type="binding site" evidence="1">
    <location>
        <position position="148"/>
    </location>
    <ligand>
        <name>Zn(2+)</name>
        <dbReference type="ChEBI" id="CHEBI:29105"/>
        <note>catalytic</note>
    </ligand>
</feature>
<feature type="binding site" evidence="1">
    <location>
        <position position="152"/>
    </location>
    <ligand>
        <name>Zn(2+)</name>
        <dbReference type="ChEBI" id="CHEBI:29105"/>
        <note>catalytic</note>
    </ligand>
</feature>
<feature type="binding site" evidence="1">
    <location>
        <position position="223"/>
    </location>
    <ligand>
        <name>Zn(2+)</name>
        <dbReference type="ChEBI" id="CHEBI:29105"/>
        <note>catalytic</note>
    </ligand>
</feature>
<gene>
    <name evidence="1" type="primary">htpX</name>
    <name type="ordered locus">LIC_20141</name>
</gene>
<organism>
    <name type="scientific">Leptospira interrogans serogroup Icterohaemorrhagiae serovar copenhageni (strain Fiocruz L1-130)</name>
    <dbReference type="NCBI Taxonomy" id="267671"/>
    <lineage>
        <taxon>Bacteria</taxon>
        <taxon>Pseudomonadati</taxon>
        <taxon>Spirochaetota</taxon>
        <taxon>Spirochaetia</taxon>
        <taxon>Leptospirales</taxon>
        <taxon>Leptospiraceae</taxon>
        <taxon>Leptospira</taxon>
    </lineage>
</organism>